<dbReference type="EMBL" id="AAFW02000152">
    <property type="protein sequence ID" value="EDN59990.1"/>
    <property type="molecule type" value="Genomic_DNA"/>
</dbReference>
<dbReference type="SMR" id="A7A047"/>
<dbReference type="HOGENOM" id="CLU_041954_1_1_1"/>
<dbReference type="Proteomes" id="UP000007060">
    <property type="component" value="Unassembled WGS sequence"/>
</dbReference>
<dbReference type="GO" id="GO:0000139">
    <property type="term" value="C:Golgi membrane"/>
    <property type="evidence" value="ECO:0007669"/>
    <property type="project" value="UniProtKB-SubCell"/>
</dbReference>
<dbReference type="GO" id="GO:0000022">
    <property type="term" value="P:mitotic spindle elongation"/>
    <property type="evidence" value="ECO:0007669"/>
    <property type="project" value="TreeGrafter"/>
</dbReference>
<dbReference type="GO" id="GO:0016192">
    <property type="term" value="P:vesicle-mediated transport"/>
    <property type="evidence" value="ECO:0007669"/>
    <property type="project" value="TreeGrafter"/>
</dbReference>
<dbReference type="InterPro" id="IPR051076">
    <property type="entry name" value="Golgi_membrane_TVP38/TMEM64"/>
</dbReference>
<dbReference type="InterPro" id="IPR032816">
    <property type="entry name" value="VTT_dom"/>
</dbReference>
<dbReference type="PANTHER" id="PTHR47549:SF1">
    <property type="entry name" value="GOLGI APPARATUS MEMBRANE PROTEIN TVP38"/>
    <property type="match status" value="1"/>
</dbReference>
<dbReference type="PANTHER" id="PTHR47549">
    <property type="entry name" value="GOLGI APPARATUS MEMBRANE PROTEIN TVP38-RELATED"/>
    <property type="match status" value="1"/>
</dbReference>
<dbReference type="Pfam" id="PF09335">
    <property type="entry name" value="VTT_dom"/>
    <property type="match status" value="1"/>
</dbReference>
<sequence>MSQSYEAGNANMGQGEDDEFDGYFEDFDNDIMPNSNNGQRVGTNAGLSFNDEVNVNDDDFLDIYNMSPRERLMHNIRKNVQKLQFYFYSLRLWQQIIIVLLGIMLMIMGILLLVFHNAILHKVVVTSNDLREKMSTHFILMVLIFFVAFPPMIGYSLLSTTTGLIYGVSFEGWVTLALGSVTGSIASFVVFKTILHSRAEKLVHLNRRFEALASILQENNSYWILALLRLCPFPYSLTNGAIAGVYGISVRNFSIANIITTPKLFIYLFIGSRVKSLAESESTGSRVFDLVSIIITLLILSLTAWLLYFKTKKRYLELQNRDRQVSTDQLPELSFEV</sequence>
<feature type="chain" id="PRO_0000343077" description="Golgi apparatus membrane protein TVP38">
    <location>
        <begin position="1"/>
        <end position="337"/>
    </location>
</feature>
<feature type="topological domain" description="Lumenal" evidence="2">
    <location>
        <begin position="1"/>
        <end position="95"/>
    </location>
</feature>
<feature type="transmembrane region" description="Helical" evidence="2">
    <location>
        <begin position="96"/>
        <end position="116"/>
    </location>
</feature>
<feature type="topological domain" description="Cytoplasmic" evidence="2">
    <location>
        <begin position="117"/>
        <end position="137"/>
    </location>
</feature>
<feature type="transmembrane region" description="Helical" evidence="2">
    <location>
        <begin position="138"/>
        <end position="158"/>
    </location>
</feature>
<feature type="topological domain" description="Lumenal" evidence="2">
    <location>
        <begin position="159"/>
        <end position="169"/>
    </location>
</feature>
<feature type="transmembrane region" description="Helical" evidence="2">
    <location>
        <begin position="170"/>
        <end position="190"/>
    </location>
</feature>
<feature type="topological domain" description="Cytoplasmic" evidence="2">
    <location>
        <begin position="191"/>
        <end position="251"/>
    </location>
</feature>
<feature type="transmembrane region" description="Helical" evidence="2">
    <location>
        <begin position="252"/>
        <end position="272"/>
    </location>
</feature>
<feature type="topological domain" description="Lumenal" evidence="2">
    <location>
        <begin position="273"/>
        <end position="286"/>
    </location>
</feature>
<feature type="transmembrane region" description="Helical" evidence="2">
    <location>
        <begin position="287"/>
        <end position="307"/>
    </location>
</feature>
<feature type="topological domain" description="Cytoplasmic" evidence="2">
    <location>
        <begin position="308"/>
        <end position="337"/>
    </location>
</feature>
<feature type="region of interest" description="VTT domain" evidence="1">
    <location>
        <begin position="163"/>
        <end position="274"/>
    </location>
</feature>
<accession>A7A047</accession>
<comment type="function">
    <text>Golgi membrane protein involved in vesicular trafficking and spindle migration.</text>
</comment>
<comment type="subcellular location">
    <subcellularLocation>
        <location>Golgi apparatus membrane</location>
        <topology>Multi-pass membrane protein</topology>
    </subcellularLocation>
</comment>
<comment type="domain">
    <text evidence="1">The VTT domain was previously called the SNARE-assoc domain. As there is no evidence that this domain associates with SNARE proteins, it was renamed as VMP1, TMEM41, and TVP38 (VTT) domain.</text>
</comment>
<comment type="similarity">
    <text evidence="3">Belongs to the TVP38/TMEM64 family.</text>
</comment>
<organism>
    <name type="scientific">Saccharomyces cerevisiae (strain YJM789)</name>
    <name type="common">Baker's yeast</name>
    <dbReference type="NCBI Taxonomy" id="307796"/>
    <lineage>
        <taxon>Eukaryota</taxon>
        <taxon>Fungi</taxon>
        <taxon>Dikarya</taxon>
        <taxon>Ascomycota</taxon>
        <taxon>Saccharomycotina</taxon>
        <taxon>Saccharomycetes</taxon>
        <taxon>Saccharomycetales</taxon>
        <taxon>Saccharomycetaceae</taxon>
        <taxon>Saccharomyces</taxon>
    </lineage>
</organism>
<protein>
    <recommendedName>
        <fullName>Golgi apparatus membrane protein TVP38</fullName>
    </recommendedName>
    <alternativeName>
        <fullName>TLG2-vesicle protein of 38 kDa</fullName>
    </alternativeName>
</protein>
<name>TVP38_YEAS7</name>
<proteinExistence type="inferred from homology"/>
<gene>
    <name type="primary">TVP38</name>
    <name type="ORF">SCY_3457</name>
</gene>
<keyword id="KW-0333">Golgi apparatus</keyword>
<keyword id="KW-0472">Membrane</keyword>
<keyword id="KW-0812">Transmembrane</keyword>
<keyword id="KW-1133">Transmembrane helix</keyword>
<reference key="1">
    <citation type="journal article" date="2007" name="Proc. Natl. Acad. Sci. U.S.A.">
        <title>Genome sequencing and comparative analysis of Saccharomyces cerevisiae strain YJM789.</title>
        <authorList>
            <person name="Wei W."/>
            <person name="McCusker J.H."/>
            <person name="Hyman R.W."/>
            <person name="Jones T."/>
            <person name="Ning Y."/>
            <person name="Cao Z."/>
            <person name="Gu Z."/>
            <person name="Bruno D."/>
            <person name="Miranda M."/>
            <person name="Nguyen M."/>
            <person name="Wilhelmy J."/>
            <person name="Komp C."/>
            <person name="Tamse R."/>
            <person name="Wang X."/>
            <person name="Jia P."/>
            <person name="Luedi P."/>
            <person name="Oefner P.J."/>
            <person name="David L."/>
            <person name="Dietrich F.S."/>
            <person name="Li Y."/>
            <person name="Davis R.W."/>
            <person name="Steinmetz L.M."/>
        </authorList>
    </citation>
    <scope>NUCLEOTIDE SEQUENCE [LARGE SCALE GENOMIC DNA]</scope>
    <source>
        <strain>YJM789</strain>
    </source>
</reference>
<evidence type="ECO:0000250" key="1">
    <source>
        <dbReference type="UniProtKB" id="P36164"/>
    </source>
</evidence>
<evidence type="ECO:0000255" key="2"/>
<evidence type="ECO:0000305" key="3"/>